<reference key="1">
    <citation type="journal article" date="2008" name="DNA Res.">
        <title>Determination of the genome sequence of Porphyromonas gingivalis strain ATCC 33277 and genomic comparison with strain W83 revealed extensive genome rearrangements in P. gingivalis.</title>
        <authorList>
            <person name="Naito M."/>
            <person name="Hirakawa H."/>
            <person name="Yamashita A."/>
            <person name="Ohara N."/>
            <person name="Shoji M."/>
            <person name="Yukitake H."/>
            <person name="Nakayama K."/>
            <person name="Toh H."/>
            <person name="Yoshimura F."/>
            <person name="Kuhara S."/>
            <person name="Hattori M."/>
            <person name="Hayashi T."/>
            <person name="Nakayama K."/>
        </authorList>
    </citation>
    <scope>NUCLEOTIDE SEQUENCE [LARGE SCALE GENOMIC DNA]</scope>
    <source>
        <strain>ATCC 33277 / DSM 20709 / CIP 103683 / JCM 12257 / NCTC 11834 / 2561</strain>
    </source>
</reference>
<organism>
    <name type="scientific">Porphyromonas gingivalis (strain ATCC 33277 / DSM 20709 / CIP 103683 / JCM 12257 / NCTC 11834 / 2561)</name>
    <dbReference type="NCBI Taxonomy" id="431947"/>
    <lineage>
        <taxon>Bacteria</taxon>
        <taxon>Pseudomonadati</taxon>
        <taxon>Bacteroidota</taxon>
        <taxon>Bacteroidia</taxon>
        <taxon>Bacteroidales</taxon>
        <taxon>Porphyromonadaceae</taxon>
        <taxon>Porphyromonas</taxon>
    </lineage>
</organism>
<gene>
    <name evidence="1" type="primary">lpxD</name>
    <name type="ordered locus">PGN_2020</name>
</gene>
<name>LPXD_PORG3</name>
<feature type="chain" id="PRO_1000127691" description="UDP-3-O-acylglucosamine N-acyltransferase">
    <location>
        <begin position="1"/>
        <end position="349"/>
    </location>
</feature>
<feature type="active site" description="Proton acceptor" evidence="1">
    <location>
        <position position="240"/>
    </location>
</feature>
<protein>
    <recommendedName>
        <fullName evidence="1">UDP-3-O-acylglucosamine N-acyltransferase</fullName>
        <ecNumber evidence="1">2.3.1.191</ecNumber>
    </recommendedName>
</protein>
<comment type="function">
    <text evidence="1">Catalyzes the N-acylation of UDP-3-O-acylglucosamine using 3-hydroxyacyl-ACP as the acyl donor. Is involved in the biosynthesis of lipid A, a phosphorylated glycolipid that anchors the lipopolysaccharide to the outer membrane of the cell.</text>
</comment>
<comment type="catalytic activity">
    <reaction evidence="1">
        <text>a UDP-3-O-[(3R)-3-hydroxyacyl]-alpha-D-glucosamine + a (3R)-hydroxyacyl-[ACP] = a UDP-2-N,3-O-bis[(3R)-3-hydroxyacyl]-alpha-D-glucosamine + holo-[ACP] + H(+)</text>
        <dbReference type="Rhea" id="RHEA:53836"/>
        <dbReference type="Rhea" id="RHEA-COMP:9685"/>
        <dbReference type="Rhea" id="RHEA-COMP:9945"/>
        <dbReference type="ChEBI" id="CHEBI:15378"/>
        <dbReference type="ChEBI" id="CHEBI:64479"/>
        <dbReference type="ChEBI" id="CHEBI:78827"/>
        <dbReference type="ChEBI" id="CHEBI:137740"/>
        <dbReference type="ChEBI" id="CHEBI:137748"/>
        <dbReference type="EC" id="2.3.1.191"/>
    </reaction>
</comment>
<comment type="pathway">
    <text evidence="1">Bacterial outer membrane biogenesis; LPS lipid A biosynthesis.</text>
</comment>
<comment type="subunit">
    <text evidence="1">Homotrimer.</text>
</comment>
<comment type="similarity">
    <text evidence="1">Belongs to the transferase hexapeptide repeat family. LpxD subfamily.</text>
</comment>
<accession>B2RME3</accession>
<keyword id="KW-0012">Acyltransferase</keyword>
<keyword id="KW-0441">Lipid A biosynthesis</keyword>
<keyword id="KW-0444">Lipid biosynthesis</keyword>
<keyword id="KW-0443">Lipid metabolism</keyword>
<keyword id="KW-0677">Repeat</keyword>
<keyword id="KW-0808">Transferase</keyword>
<evidence type="ECO:0000255" key="1">
    <source>
        <dbReference type="HAMAP-Rule" id="MF_00523"/>
    </source>
</evidence>
<sequence length="349" mass="37356">MEFTAQQIADFLHGSVEGNPKVRLHDFAKIEEGRSGCLSFLANAKYEHYLYQTQSDAVLVNQDFEPRESVKTTLIRVPNAYAALAQLMQLVDSMKPQRKGVDSTAFVHPSVILPDDCYVGAFAYVSEGASLGTGCSLYPHVYVGSGVSVGEGTILYPHVTVYDGCSIGSRCVIHSGAVIGADGFGFAPNAEGYSKIPQLGNVIIEDDVEIGANTCIDRAVMDSTIIHRGVKLDNLVQIAHNCSVGSHTVFAAQVGMAGSSHVGEWCQFGGQVGLSGHIKVGDRVSLGGQTGLLSNVKSGSTLLGSPGMPLRDMLRASVIFPKLPDMSLRIEQLEKEISELKEICKNNKH</sequence>
<proteinExistence type="inferred from homology"/>
<dbReference type="EC" id="2.3.1.191" evidence="1"/>
<dbReference type="EMBL" id="AP009380">
    <property type="protein sequence ID" value="BAG34538.1"/>
    <property type="molecule type" value="Genomic_DNA"/>
</dbReference>
<dbReference type="RefSeq" id="WP_004583732.1">
    <property type="nucleotide sequence ID" value="NZ_CP025930.1"/>
</dbReference>
<dbReference type="SMR" id="B2RME3"/>
<dbReference type="GeneID" id="29257156"/>
<dbReference type="KEGG" id="pgn:PGN_2020"/>
<dbReference type="eggNOG" id="COG1044">
    <property type="taxonomic scope" value="Bacteria"/>
</dbReference>
<dbReference type="HOGENOM" id="CLU_049865_0_0_10"/>
<dbReference type="OrthoDB" id="9784739at2"/>
<dbReference type="BioCyc" id="PGIN431947:G1G2V-2253-MONOMER"/>
<dbReference type="UniPathway" id="UPA00973"/>
<dbReference type="Proteomes" id="UP000008842">
    <property type="component" value="Chromosome"/>
</dbReference>
<dbReference type="GO" id="GO:0016020">
    <property type="term" value="C:membrane"/>
    <property type="evidence" value="ECO:0007669"/>
    <property type="project" value="GOC"/>
</dbReference>
<dbReference type="GO" id="GO:0016410">
    <property type="term" value="F:N-acyltransferase activity"/>
    <property type="evidence" value="ECO:0007669"/>
    <property type="project" value="InterPro"/>
</dbReference>
<dbReference type="GO" id="GO:0009245">
    <property type="term" value="P:lipid A biosynthetic process"/>
    <property type="evidence" value="ECO:0007669"/>
    <property type="project" value="UniProtKB-UniRule"/>
</dbReference>
<dbReference type="CDD" id="cd03352">
    <property type="entry name" value="LbH_LpxD"/>
    <property type="match status" value="1"/>
</dbReference>
<dbReference type="Gene3D" id="2.160.10.10">
    <property type="entry name" value="Hexapeptide repeat proteins"/>
    <property type="match status" value="1"/>
</dbReference>
<dbReference type="Gene3D" id="3.40.1390.10">
    <property type="entry name" value="MurE/MurF, N-terminal domain"/>
    <property type="match status" value="1"/>
</dbReference>
<dbReference type="HAMAP" id="MF_00523">
    <property type="entry name" value="LpxD"/>
    <property type="match status" value="1"/>
</dbReference>
<dbReference type="InterPro" id="IPR001451">
    <property type="entry name" value="Hexapep"/>
</dbReference>
<dbReference type="InterPro" id="IPR007691">
    <property type="entry name" value="LpxD"/>
</dbReference>
<dbReference type="InterPro" id="IPR011004">
    <property type="entry name" value="Trimer_LpxA-like_sf"/>
</dbReference>
<dbReference type="InterPro" id="IPR020573">
    <property type="entry name" value="UDP_GlcNAc_AcTrfase_non-rep"/>
</dbReference>
<dbReference type="NCBIfam" id="TIGR01853">
    <property type="entry name" value="lipid_A_lpxD"/>
    <property type="match status" value="1"/>
</dbReference>
<dbReference type="NCBIfam" id="NF002060">
    <property type="entry name" value="PRK00892.1"/>
    <property type="match status" value="1"/>
</dbReference>
<dbReference type="PANTHER" id="PTHR43378">
    <property type="entry name" value="UDP-3-O-ACYLGLUCOSAMINE N-ACYLTRANSFERASE"/>
    <property type="match status" value="1"/>
</dbReference>
<dbReference type="PANTHER" id="PTHR43378:SF2">
    <property type="entry name" value="UDP-3-O-ACYLGLUCOSAMINE N-ACYLTRANSFERASE 1, MITOCHONDRIAL-RELATED"/>
    <property type="match status" value="1"/>
</dbReference>
<dbReference type="Pfam" id="PF00132">
    <property type="entry name" value="Hexapep"/>
    <property type="match status" value="1"/>
</dbReference>
<dbReference type="Pfam" id="PF04613">
    <property type="entry name" value="LpxD"/>
    <property type="match status" value="1"/>
</dbReference>
<dbReference type="SUPFAM" id="SSF51161">
    <property type="entry name" value="Trimeric LpxA-like enzymes"/>
    <property type="match status" value="1"/>
</dbReference>